<proteinExistence type="evidence at protein level"/>
<reference key="1">
    <citation type="journal article" date="1996" name="J. Bacteriol.">
        <title>Dra-nupC-pdp operon of Bacillus subtilis: nucleotide sequence, induction by deoxyribonucleosides, and transcriptional regulation by the deoR-encoded DeoR repressor protein.</title>
        <authorList>
            <person name="Saxild H.H."/>
            <person name="Andersen L.N."/>
            <person name="Hammer K."/>
        </authorList>
    </citation>
    <scope>NUCLEOTIDE SEQUENCE [GENOMIC DNA]</scope>
    <scope>FUNCTION</scope>
    <source>
        <strain>168</strain>
    </source>
</reference>
<reference key="2">
    <citation type="journal article" date="1995" name="DNA Res.">
        <title>Cloning and sequencing of a 23-kb region of the Bacillus subtilis genome between the iol and hut operons.</title>
        <authorList>
            <person name="Yoshida K."/>
            <person name="Fujimyra M."/>
            <person name="Yanai N."/>
            <person name="Fujita Y."/>
        </authorList>
    </citation>
    <scope>NUCLEOTIDE SEQUENCE [GENOMIC DNA]</scope>
    <source>
        <strain>168 / BGSC1A1</strain>
    </source>
</reference>
<reference key="3">
    <citation type="journal article" date="1997" name="Nature">
        <title>The complete genome sequence of the Gram-positive bacterium Bacillus subtilis.</title>
        <authorList>
            <person name="Kunst F."/>
            <person name="Ogasawara N."/>
            <person name="Moszer I."/>
            <person name="Albertini A.M."/>
            <person name="Alloni G."/>
            <person name="Azevedo V."/>
            <person name="Bertero M.G."/>
            <person name="Bessieres P."/>
            <person name="Bolotin A."/>
            <person name="Borchert S."/>
            <person name="Borriss R."/>
            <person name="Boursier L."/>
            <person name="Brans A."/>
            <person name="Braun M."/>
            <person name="Brignell S.C."/>
            <person name="Bron S."/>
            <person name="Brouillet S."/>
            <person name="Bruschi C.V."/>
            <person name="Caldwell B."/>
            <person name="Capuano V."/>
            <person name="Carter N.M."/>
            <person name="Choi S.-K."/>
            <person name="Codani J.-J."/>
            <person name="Connerton I.F."/>
            <person name="Cummings N.J."/>
            <person name="Daniel R.A."/>
            <person name="Denizot F."/>
            <person name="Devine K.M."/>
            <person name="Duesterhoeft A."/>
            <person name="Ehrlich S.D."/>
            <person name="Emmerson P.T."/>
            <person name="Entian K.-D."/>
            <person name="Errington J."/>
            <person name="Fabret C."/>
            <person name="Ferrari E."/>
            <person name="Foulger D."/>
            <person name="Fritz C."/>
            <person name="Fujita M."/>
            <person name="Fujita Y."/>
            <person name="Fuma S."/>
            <person name="Galizzi A."/>
            <person name="Galleron N."/>
            <person name="Ghim S.-Y."/>
            <person name="Glaser P."/>
            <person name="Goffeau A."/>
            <person name="Golightly E.J."/>
            <person name="Grandi G."/>
            <person name="Guiseppi G."/>
            <person name="Guy B.J."/>
            <person name="Haga K."/>
            <person name="Haiech J."/>
            <person name="Harwood C.R."/>
            <person name="Henaut A."/>
            <person name="Hilbert H."/>
            <person name="Holsappel S."/>
            <person name="Hosono S."/>
            <person name="Hullo M.-F."/>
            <person name="Itaya M."/>
            <person name="Jones L.-M."/>
            <person name="Joris B."/>
            <person name="Karamata D."/>
            <person name="Kasahara Y."/>
            <person name="Klaerr-Blanchard M."/>
            <person name="Klein C."/>
            <person name="Kobayashi Y."/>
            <person name="Koetter P."/>
            <person name="Koningstein G."/>
            <person name="Krogh S."/>
            <person name="Kumano M."/>
            <person name="Kurita K."/>
            <person name="Lapidus A."/>
            <person name="Lardinois S."/>
            <person name="Lauber J."/>
            <person name="Lazarevic V."/>
            <person name="Lee S.-M."/>
            <person name="Levine A."/>
            <person name="Liu H."/>
            <person name="Masuda S."/>
            <person name="Mauel C."/>
            <person name="Medigue C."/>
            <person name="Medina N."/>
            <person name="Mellado R.P."/>
            <person name="Mizuno M."/>
            <person name="Moestl D."/>
            <person name="Nakai S."/>
            <person name="Noback M."/>
            <person name="Noone D."/>
            <person name="O'Reilly M."/>
            <person name="Ogawa K."/>
            <person name="Ogiwara A."/>
            <person name="Oudega B."/>
            <person name="Park S.-H."/>
            <person name="Parro V."/>
            <person name="Pohl T.M."/>
            <person name="Portetelle D."/>
            <person name="Porwollik S."/>
            <person name="Prescott A.M."/>
            <person name="Presecan E."/>
            <person name="Pujic P."/>
            <person name="Purnelle B."/>
            <person name="Rapoport G."/>
            <person name="Rey M."/>
            <person name="Reynolds S."/>
            <person name="Rieger M."/>
            <person name="Rivolta C."/>
            <person name="Rocha E."/>
            <person name="Roche B."/>
            <person name="Rose M."/>
            <person name="Sadaie Y."/>
            <person name="Sato T."/>
            <person name="Scanlan E."/>
            <person name="Schleich S."/>
            <person name="Schroeter R."/>
            <person name="Scoffone F."/>
            <person name="Sekiguchi J."/>
            <person name="Sekowska A."/>
            <person name="Seror S.J."/>
            <person name="Serror P."/>
            <person name="Shin B.-S."/>
            <person name="Soldo B."/>
            <person name="Sorokin A."/>
            <person name="Tacconi E."/>
            <person name="Takagi T."/>
            <person name="Takahashi H."/>
            <person name="Takemaru K."/>
            <person name="Takeuchi M."/>
            <person name="Tamakoshi A."/>
            <person name="Tanaka T."/>
            <person name="Terpstra P."/>
            <person name="Tognoni A."/>
            <person name="Tosato V."/>
            <person name="Uchiyama S."/>
            <person name="Vandenbol M."/>
            <person name="Vannier F."/>
            <person name="Vassarotti A."/>
            <person name="Viari A."/>
            <person name="Wambutt R."/>
            <person name="Wedler E."/>
            <person name="Wedler H."/>
            <person name="Weitzenegger T."/>
            <person name="Winters P."/>
            <person name="Wipat A."/>
            <person name="Yamamoto H."/>
            <person name="Yamane K."/>
            <person name="Yasumoto K."/>
            <person name="Yata K."/>
            <person name="Yoshida K."/>
            <person name="Yoshikawa H.-F."/>
            <person name="Zumstein E."/>
            <person name="Yoshikawa H."/>
            <person name="Danchin A."/>
        </authorList>
    </citation>
    <scope>NUCLEOTIDE SEQUENCE [LARGE SCALE GENOMIC DNA]</scope>
    <source>
        <strain>168</strain>
    </source>
</reference>
<reference key="4">
    <citation type="journal article" date="1999" name="J. Bacteriol.">
        <title>Identification and characterization of a DeoR-specific operator sequence essential for induction of dra-nupC-pdp operon expression in Bacillus subtilis.</title>
        <authorList>
            <person name="Zeng X."/>
            <person name="Saxild H.H."/>
        </authorList>
    </citation>
    <scope>FUNCTION</scope>
    <scope>DNA-BINDING</scope>
    <source>
        <strain>168</strain>
    </source>
</reference>
<reference key="5">
    <citation type="journal article" date="2000" name="J. Bacteriol.">
        <title>Purification and characterization of the DeoR repressor of Bacillus subtilis.</title>
        <authorList>
            <person name="Zeng X."/>
            <person name="Saxild H.H."/>
            <person name="Switzer R.L."/>
        </authorList>
    </citation>
    <scope>FUNCTION</scope>
    <scope>DNA-BINDING</scope>
    <scope>SUBUNIT</scope>
    <source>
        <strain>168</strain>
    </source>
</reference>
<comment type="function">
    <text evidence="2 3 4">Negative regulator of the dra-nupC-pdp operon. DeoR binds cooperatively to the operator DNA, which consists of a palindrome and a direct repeat sequence located 3' to the palindrome.</text>
</comment>
<comment type="subunit">
    <text evidence="3">Homooctamer.</text>
</comment>
<comment type="interaction">
    <interactant intactId="EBI-9538573">
        <id>P39140</id>
    </interactant>
    <interactant intactId="EBI-9538573">
        <id>P39140</id>
        <label>deoR</label>
    </interactant>
    <organismsDiffer>false</organismsDiffer>
    <experiments>3</experiments>
</comment>
<comment type="miscellaneous">
    <text evidence="2 3">Deoxyribose-5-phosphate is most likely the effector that modulates binding of DeoR to DNA.</text>
</comment>
<comment type="similarity">
    <text evidence="6">Belongs to the SorC transcriptional regulatory family.</text>
</comment>
<gene>
    <name evidence="5" type="primary">deoR</name>
    <name type="synonym">yxxC</name>
    <name type="ordered locus">BSU39430</name>
</gene>
<evidence type="ECO:0000255" key="1"/>
<evidence type="ECO:0000269" key="2">
    <source>
    </source>
</evidence>
<evidence type="ECO:0000269" key="3">
    <source>
    </source>
</evidence>
<evidence type="ECO:0000269" key="4">
    <source>
    </source>
</evidence>
<evidence type="ECO:0000303" key="5">
    <source>
    </source>
</evidence>
<evidence type="ECO:0000305" key="6"/>
<evidence type="ECO:0007829" key="7">
    <source>
        <dbReference type="PDB" id="4OQP"/>
    </source>
</evidence>
<evidence type="ECO:0007829" key="8">
    <source>
        <dbReference type="PDB" id="4OQQ"/>
    </source>
</evidence>
<evidence type="ECO:0007829" key="9">
    <source>
        <dbReference type="PDB" id="7BHY"/>
    </source>
</evidence>
<protein>
    <recommendedName>
        <fullName evidence="6">Deoxyribonucleoside regulator</fullName>
    </recommendedName>
</protein>
<name>DEOR_BACSU</name>
<dbReference type="EMBL" id="X82174">
    <property type="protein sequence ID" value="CAA57661.1"/>
    <property type="molecule type" value="Genomic_DNA"/>
</dbReference>
<dbReference type="EMBL" id="D45912">
    <property type="protein sequence ID" value="BAA08336.1"/>
    <property type="molecule type" value="Genomic_DNA"/>
</dbReference>
<dbReference type="EMBL" id="AL009126">
    <property type="protein sequence ID" value="CAB15979.1"/>
    <property type="molecule type" value="Genomic_DNA"/>
</dbReference>
<dbReference type="PIR" id="S78768">
    <property type="entry name" value="S49454"/>
</dbReference>
<dbReference type="RefSeq" id="NP_391822.1">
    <property type="nucleotide sequence ID" value="NC_000964.3"/>
</dbReference>
<dbReference type="RefSeq" id="WP_003227124.1">
    <property type="nucleotide sequence ID" value="NZ_OZ025638.1"/>
</dbReference>
<dbReference type="PDB" id="4OQP">
    <property type="method" value="X-ray"/>
    <property type="resolution" value="1.60 A"/>
    <property type="chains" value="A=56-313"/>
</dbReference>
<dbReference type="PDB" id="4OQQ">
    <property type="method" value="X-ray"/>
    <property type="resolution" value="1.80 A"/>
    <property type="chains" value="A/B=56-313"/>
</dbReference>
<dbReference type="PDB" id="7BHY">
    <property type="method" value="X-ray"/>
    <property type="resolution" value="2.30 A"/>
    <property type="chains" value="A/B/C=4-55"/>
</dbReference>
<dbReference type="PDB" id="8R7Y">
    <property type="method" value="X-ray"/>
    <property type="resolution" value="3.70 A"/>
    <property type="chains" value="A/B/C/D=2-313"/>
</dbReference>
<dbReference type="PDBsum" id="4OQP"/>
<dbReference type="PDBsum" id="4OQQ"/>
<dbReference type="PDBsum" id="7BHY"/>
<dbReference type="PDBsum" id="8R7Y"/>
<dbReference type="SMR" id="P39140"/>
<dbReference type="FunCoup" id="P39140">
    <property type="interactions" value="68"/>
</dbReference>
<dbReference type="MINT" id="P39140"/>
<dbReference type="STRING" id="224308.BSU39430"/>
<dbReference type="PaxDb" id="224308-BSU39430"/>
<dbReference type="EnsemblBacteria" id="CAB15979">
    <property type="protein sequence ID" value="CAB15979"/>
    <property type="gene ID" value="BSU_39430"/>
</dbReference>
<dbReference type="GeneID" id="937543"/>
<dbReference type="KEGG" id="bsu:BSU39430"/>
<dbReference type="PATRIC" id="fig|224308.179.peg.4268"/>
<dbReference type="eggNOG" id="COG2390">
    <property type="taxonomic scope" value="Bacteria"/>
</dbReference>
<dbReference type="InParanoid" id="P39140"/>
<dbReference type="OrthoDB" id="58802at2"/>
<dbReference type="PhylomeDB" id="P39140"/>
<dbReference type="BioCyc" id="BSUB:BSU39430-MONOMER"/>
<dbReference type="EvolutionaryTrace" id="P39140"/>
<dbReference type="Proteomes" id="UP000001570">
    <property type="component" value="Chromosome"/>
</dbReference>
<dbReference type="GO" id="GO:0030246">
    <property type="term" value="F:carbohydrate binding"/>
    <property type="evidence" value="ECO:0007669"/>
    <property type="project" value="InterPro"/>
</dbReference>
<dbReference type="GO" id="GO:0000987">
    <property type="term" value="F:cis-regulatory region sequence-specific DNA binding"/>
    <property type="evidence" value="ECO:0000318"/>
    <property type="project" value="GO_Central"/>
</dbReference>
<dbReference type="GO" id="GO:0042802">
    <property type="term" value="F:identical protein binding"/>
    <property type="evidence" value="ECO:0000353"/>
    <property type="project" value="IntAct"/>
</dbReference>
<dbReference type="GO" id="GO:2000142">
    <property type="term" value="P:regulation of DNA-templated transcription initiation"/>
    <property type="evidence" value="ECO:0000318"/>
    <property type="project" value="GO_Central"/>
</dbReference>
<dbReference type="Gene3D" id="3.40.50.1360">
    <property type="match status" value="1"/>
</dbReference>
<dbReference type="Gene3D" id="1.10.10.60">
    <property type="entry name" value="Homeodomain-like"/>
    <property type="match status" value="1"/>
</dbReference>
<dbReference type="InterPro" id="IPR037171">
    <property type="entry name" value="NagB/RpiA_transferase-like"/>
</dbReference>
<dbReference type="InterPro" id="IPR013324">
    <property type="entry name" value="RNA_pol_sigma_r3/r4-like"/>
</dbReference>
<dbReference type="InterPro" id="IPR051054">
    <property type="entry name" value="SorC_transcr_regulators"/>
</dbReference>
<dbReference type="InterPro" id="IPR007324">
    <property type="entry name" value="Sugar-bd_dom_put"/>
</dbReference>
<dbReference type="PANTHER" id="PTHR34294:SF1">
    <property type="entry name" value="TRANSCRIPTIONAL REGULATOR LSRR"/>
    <property type="match status" value="1"/>
</dbReference>
<dbReference type="PANTHER" id="PTHR34294">
    <property type="entry name" value="TRANSCRIPTIONAL REGULATOR-RELATED"/>
    <property type="match status" value="1"/>
</dbReference>
<dbReference type="Pfam" id="PF13384">
    <property type="entry name" value="HTH_23"/>
    <property type="match status" value="1"/>
</dbReference>
<dbReference type="Pfam" id="PF04198">
    <property type="entry name" value="Sugar-bind"/>
    <property type="match status" value="1"/>
</dbReference>
<dbReference type="SUPFAM" id="SSF100950">
    <property type="entry name" value="NagB/RpiA/CoA transferase-like"/>
    <property type="match status" value="1"/>
</dbReference>
<dbReference type="SUPFAM" id="SSF88659">
    <property type="entry name" value="Sigma3 and sigma4 domains of RNA polymerase sigma factors"/>
    <property type="match status" value="1"/>
</dbReference>
<organism>
    <name type="scientific">Bacillus subtilis (strain 168)</name>
    <dbReference type="NCBI Taxonomy" id="224308"/>
    <lineage>
        <taxon>Bacteria</taxon>
        <taxon>Bacillati</taxon>
        <taxon>Bacillota</taxon>
        <taxon>Bacilli</taxon>
        <taxon>Bacillales</taxon>
        <taxon>Bacillaceae</taxon>
        <taxon>Bacillus</taxon>
    </lineage>
</organism>
<keyword id="KW-0002">3D-structure</keyword>
<keyword id="KW-0238">DNA-binding</keyword>
<keyword id="KW-1185">Reference proteome</keyword>
<keyword id="KW-0678">Repressor</keyword>
<keyword id="KW-0804">Transcription</keyword>
<keyword id="KW-0805">Transcription regulation</keyword>
<feature type="chain" id="PRO_0000062788" description="Deoxyribonucleoside regulator">
    <location>
        <begin position="1"/>
        <end position="313"/>
    </location>
</feature>
<feature type="DNA-binding region" description="H-T-H motif" evidence="1">
    <location>
        <begin position="23"/>
        <end position="42"/>
    </location>
</feature>
<feature type="helix" evidence="9">
    <location>
        <begin position="4"/>
        <end position="17"/>
    </location>
</feature>
<feature type="helix" evidence="9">
    <location>
        <begin position="23"/>
        <end position="30"/>
    </location>
</feature>
<feature type="helix" evidence="9">
    <location>
        <begin position="34"/>
        <end position="46"/>
    </location>
</feature>
<feature type="strand" evidence="9">
    <location>
        <begin position="49"/>
        <end position="54"/>
    </location>
</feature>
<feature type="helix" evidence="7">
    <location>
        <begin position="61"/>
        <end position="72"/>
    </location>
</feature>
<feature type="strand" evidence="7">
    <location>
        <begin position="75"/>
        <end position="80"/>
    </location>
</feature>
<feature type="helix" evidence="7">
    <location>
        <begin position="87"/>
        <end position="105"/>
    </location>
</feature>
<feature type="strand" evidence="7">
    <location>
        <begin position="111"/>
        <end position="114"/>
    </location>
</feature>
<feature type="helix" evidence="7">
    <location>
        <begin position="118"/>
        <end position="126"/>
    </location>
</feature>
<feature type="strand" evidence="7">
    <location>
        <begin position="136"/>
        <end position="141"/>
    </location>
</feature>
<feature type="strand" evidence="7">
    <location>
        <begin position="146"/>
        <end position="148"/>
    </location>
</feature>
<feature type="helix" evidence="7">
    <location>
        <begin position="153"/>
        <end position="163"/>
    </location>
</feature>
<feature type="strand" evidence="8">
    <location>
        <begin position="173"/>
        <end position="176"/>
    </location>
</feature>
<feature type="helix" evidence="7">
    <location>
        <begin position="180"/>
        <end position="187"/>
    </location>
</feature>
<feature type="helix" evidence="7">
    <location>
        <begin position="190"/>
        <end position="201"/>
    </location>
</feature>
<feature type="strand" evidence="7">
    <location>
        <begin position="203"/>
        <end position="207"/>
    </location>
</feature>
<feature type="helix" evidence="7">
    <location>
        <begin position="217"/>
        <end position="219"/>
    </location>
</feature>
<feature type="strand" evidence="7">
    <location>
        <begin position="220"/>
        <end position="222"/>
    </location>
</feature>
<feature type="helix" evidence="7">
    <location>
        <begin position="226"/>
        <end position="235"/>
    </location>
</feature>
<feature type="strand" evidence="7">
    <location>
        <begin position="238"/>
        <end position="240"/>
    </location>
</feature>
<feature type="strand" evidence="7">
    <location>
        <begin position="243"/>
        <end position="245"/>
    </location>
</feature>
<feature type="helix" evidence="7">
    <location>
        <begin position="254"/>
        <end position="257"/>
    </location>
</feature>
<feature type="helix" evidence="7">
    <location>
        <begin position="265"/>
        <end position="268"/>
    </location>
</feature>
<feature type="strand" evidence="7">
    <location>
        <begin position="271"/>
        <end position="277"/>
    </location>
</feature>
<feature type="helix" evidence="7">
    <location>
        <begin position="281"/>
        <end position="283"/>
    </location>
</feature>
<feature type="helix" evidence="7">
    <location>
        <begin position="284"/>
        <end position="292"/>
    </location>
</feature>
<feature type="strand" evidence="7">
    <location>
        <begin position="297"/>
        <end position="302"/>
    </location>
</feature>
<feature type="helix" evidence="7">
    <location>
        <begin position="303"/>
        <end position="310"/>
    </location>
</feature>
<sequence>MDREKQQLSIEAARLYYQSDYSQQQIAEQLNISRPTVSRLLQYAKEKGYVQIRVMDPFEDLDALGSILEEKYGLLEAHVVFSPTPDYAGITHDLSRYGAEYMHETVKDGDIVGVSWGTTMYQIAQNMQPKQVKGVEVVQLKGGISHSRVNTYSAETIQLFAEAFQTMPRYLPLPVVFDNADVKRMVEKDRHIERIIEMGKQANIALFTVGTVRDEALLFRLGYFNEEEKALLKKQAVGDICSRFFDAKGNICSSAINDRTIGVELQDLRLKERSILVAGGSRKVSSIHGALTGKYANVLIIDQHTARALVNDL</sequence>
<accession>P39140</accession>